<comment type="subcellular location">
    <subcellularLocation>
        <location>Secreted</location>
    </subcellularLocation>
</comment>
<comment type="domain">
    <text>Avian ovomucoid consists of three homologous, tandem Kazal family inhibitory domains.</text>
</comment>
<dbReference type="PIR" id="C61587">
    <property type="entry name" value="C61587"/>
</dbReference>
<dbReference type="SMR" id="P52251"/>
<dbReference type="GO" id="GO:0005576">
    <property type="term" value="C:extracellular region"/>
    <property type="evidence" value="ECO:0007669"/>
    <property type="project" value="UniProtKB-SubCell"/>
</dbReference>
<dbReference type="GO" id="GO:0004867">
    <property type="term" value="F:serine-type endopeptidase inhibitor activity"/>
    <property type="evidence" value="ECO:0007669"/>
    <property type="project" value="UniProtKB-KW"/>
</dbReference>
<dbReference type="CDD" id="cd00104">
    <property type="entry name" value="KAZAL_FS"/>
    <property type="match status" value="1"/>
</dbReference>
<dbReference type="FunFam" id="3.30.60.30:FF:000037">
    <property type="entry name" value="Ovomucoid"/>
    <property type="match status" value="1"/>
</dbReference>
<dbReference type="Gene3D" id="3.30.60.30">
    <property type="match status" value="1"/>
</dbReference>
<dbReference type="InterPro" id="IPR050159">
    <property type="entry name" value="Kazal-type_SerProtInhib"/>
</dbReference>
<dbReference type="InterPro" id="IPR002350">
    <property type="entry name" value="Kazal_dom"/>
</dbReference>
<dbReference type="InterPro" id="IPR036058">
    <property type="entry name" value="Kazal_dom_sf"/>
</dbReference>
<dbReference type="PANTHER" id="PTHR47499:SF1">
    <property type="entry name" value="SERINE PROTEASE INHIBITOR KAZAL-TYPE 7"/>
    <property type="match status" value="1"/>
</dbReference>
<dbReference type="PANTHER" id="PTHR47499">
    <property type="entry name" value="SERINE PROTEASE INHIBITOR KAZAL-TYPE 7 SPINK7"/>
    <property type="match status" value="1"/>
</dbReference>
<dbReference type="Pfam" id="PF00050">
    <property type="entry name" value="Kazal_1"/>
    <property type="match status" value="1"/>
</dbReference>
<dbReference type="SMART" id="SM00280">
    <property type="entry name" value="KAZAL"/>
    <property type="match status" value="1"/>
</dbReference>
<dbReference type="SUPFAM" id="SSF100895">
    <property type="entry name" value="Kazal-type serine protease inhibitors"/>
    <property type="match status" value="1"/>
</dbReference>
<dbReference type="PROSITE" id="PS00282">
    <property type="entry name" value="KAZAL_1"/>
    <property type="match status" value="1"/>
</dbReference>
<dbReference type="PROSITE" id="PS51465">
    <property type="entry name" value="KAZAL_2"/>
    <property type="match status" value="1"/>
</dbReference>
<feature type="chain" id="PRO_0000073174" description="Ovomucoid">
    <location>
        <begin position="1" status="less than"/>
        <end position="51" status="greater than"/>
    </location>
</feature>
<feature type="domain" description="Kazal-like" evidence="1">
    <location>
        <begin position="3"/>
        <end position="51"/>
    </location>
</feature>
<feature type="site" description="Reactive bond 3">
    <location>
        <begin position="15"/>
        <end position="16"/>
    </location>
</feature>
<feature type="glycosylation site" description="N-linked (GlcNAc...) asparagine">
    <location>
        <position position="42"/>
    </location>
</feature>
<feature type="disulfide bond">
    <location>
        <begin position="5"/>
        <end position="35"/>
    </location>
</feature>
<feature type="disulfide bond">
    <location>
        <begin position="13"/>
        <end position="32"/>
    </location>
</feature>
<feature type="disulfide bond">
    <location>
        <begin position="21"/>
        <end position="51"/>
    </location>
</feature>
<feature type="non-terminal residue">
    <location>
        <position position="1"/>
    </location>
</feature>
<feature type="non-terminal residue">
    <location>
        <position position="51"/>
    </location>
</feature>
<organism>
    <name type="scientific">Rhynchotus rufescens</name>
    <name type="common">Red-winged tinamou</name>
    <name type="synonym">Tinamus rufescens</name>
    <dbReference type="NCBI Taxonomy" id="30466"/>
    <lineage>
        <taxon>Eukaryota</taxon>
        <taxon>Metazoa</taxon>
        <taxon>Chordata</taxon>
        <taxon>Craniata</taxon>
        <taxon>Vertebrata</taxon>
        <taxon>Euteleostomi</taxon>
        <taxon>Archelosauria</taxon>
        <taxon>Archosauria</taxon>
        <taxon>Dinosauria</taxon>
        <taxon>Saurischia</taxon>
        <taxon>Theropoda</taxon>
        <taxon>Coelurosauria</taxon>
        <taxon>Aves</taxon>
        <taxon>Palaeognathae</taxon>
        <taxon>Tinamiformes</taxon>
        <taxon>Tinamidae</taxon>
        <taxon>Rhynchotus</taxon>
    </lineage>
</organism>
<proteinExistence type="evidence at protein level"/>
<sequence length="51" mass="5558">VTVDCSGYPKPDCTLESFPLCGSDNQTYSNKCAFCNAAVERNVTLRHLGEC</sequence>
<name>IOVO_RHYFU</name>
<evidence type="ECO:0000255" key="1">
    <source>
        <dbReference type="PROSITE-ProRule" id="PRU00798"/>
    </source>
</evidence>
<accession>P52251</accession>
<protein>
    <recommendedName>
        <fullName>Ovomucoid</fullName>
    </recommendedName>
</protein>
<reference key="1">
    <citation type="journal article" date="1993" name="J. Protein Chem.">
        <title>Amino acid sequences of ovomucoid third domains from 27 additional species of birds.</title>
        <authorList>
            <person name="Apostol I."/>
            <person name="Giletto A."/>
            <person name="Komiyama T."/>
            <person name="Zhang W."/>
            <person name="Laskowski M. Jr."/>
        </authorList>
    </citation>
    <scope>PROTEIN SEQUENCE</scope>
</reference>
<keyword id="KW-0903">Direct protein sequencing</keyword>
<keyword id="KW-1015">Disulfide bond</keyword>
<keyword id="KW-0325">Glycoprotein</keyword>
<keyword id="KW-0646">Protease inhibitor</keyword>
<keyword id="KW-0677">Repeat</keyword>
<keyword id="KW-0964">Secreted</keyword>
<keyword id="KW-0722">Serine protease inhibitor</keyword>